<organismHost>
    <name type="scientific">Acanthamoeba polyphaga</name>
    <name type="common">Amoeba</name>
    <dbReference type="NCBI Taxonomy" id="5757"/>
</organismHost>
<sequence>MSTLSPIYSRCATQGNSCPVSTIPEAMAYADPNGTGTIYYRNSEANKAFTCNNASFGNQTNSTAYQCYNGNLPTDFRTAGSSFYENGIPKGWTKCSDENETCDPKVNSDVDILFGADGSYVYSSAKSVPCNINIFGDPKQGVKKACYWRSPLIPINHTPSTPVTPTTPSGTQTTGHKWWVYLLLFGIPLLILIFLIIFFIAKK</sequence>
<accession>Q5UNV5</accession>
<gene>
    <name type="ordered locus">MIMI_L701</name>
</gene>
<proteinExistence type="evidence at protein level"/>
<protein>
    <recommendedName>
        <fullName>Uncharacterized protein L701</fullName>
    </recommendedName>
</protein>
<feature type="chain" id="PRO_0000071328" description="Uncharacterized protein L701">
    <location>
        <begin position="1"/>
        <end position="203"/>
    </location>
</feature>
<feature type="transmembrane region" description="Helical" evidence="1">
    <location>
        <begin position="180"/>
        <end position="200"/>
    </location>
</feature>
<dbReference type="EMBL" id="AY653733">
    <property type="protein sequence ID" value="AAV50961.1"/>
    <property type="molecule type" value="Genomic_DNA"/>
</dbReference>
<dbReference type="SMR" id="Q5UNV5"/>
<dbReference type="KEGG" id="vg:9925354"/>
<dbReference type="Proteomes" id="UP000001134">
    <property type="component" value="Genome"/>
</dbReference>
<dbReference type="GO" id="GO:0033644">
    <property type="term" value="C:host cell membrane"/>
    <property type="evidence" value="ECO:0007669"/>
    <property type="project" value="UniProtKB-SubCell"/>
</dbReference>
<dbReference type="GO" id="GO:0016020">
    <property type="term" value="C:membrane"/>
    <property type="evidence" value="ECO:0007669"/>
    <property type="project" value="UniProtKB-KW"/>
</dbReference>
<dbReference type="GO" id="GO:0044423">
    <property type="term" value="C:virion component"/>
    <property type="evidence" value="ECO:0007669"/>
    <property type="project" value="UniProtKB-KW"/>
</dbReference>
<organism>
    <name type="scientific">Acanthamoeba polyphaga mimivirus</name>
    <name type="common">APMV</name>
    <dbReference type="NCBI Taxonomy" id="212035"/>
    <lineage>
        <taxon>Viruses</taxon>
        <taxon>Varidnaviria</taxon>
        <taxon>Bamfordvirae</taxon>
        <taxon>Nucleocytoviricota</taxon>
        <taxon>Megaviricetes</taxon>
        <taxon>Imitervirales</taxon>
        <taxon>Mimiviridae</taxon>
        <taxon>Megamimivirinae</taxon>
        <taxon>Mimivirus</taxon>
        <taxon>Mimivirus bradfordmassiliense</taxon>
    </lineage>
</organism>
<evidence type="ECO:0000255" key="1"/>
<evidence type="ECO:0000269" key="2">
    <source>
    </source>
</evidence>
<evidence type="ECO:0000305" key="3"/>
<name>YL701_MIMIV</name>
<reference key="1">
    <citation type="journal article" date="2004" name="Science">
        <title>The 1.2-megabase genome sequence of Mimivirus.</title>
        <authorList>
            <person name="Raoult D."/>
            <person name="Audic S."/>
            <person name="Robert C."/>
            <person name="Abergel C."/>
            <person name="Renesto P."/>
            <person name="Ogata H."/>
            <person name="La Scola B."/>
            <person name="Susan M."/>
            <person name="Claverie J.-M."/>
        </authorList>
    </citation>
    <scope>NUCLEOTIDE SEQUENCE [LARGE SCALE GENOMIC DNA]</scope>
    <source>
        <strain>Rowbotham-Bradford</strain>
    </source>
</reference>
<reference key="2">
    <citation type="journal article" date="2006" name="J. Virol.">
        <title>Mimivirus giant particles incorporate a large fraction of anonymous and unique gene products.</title>
        <authorList>
            <person name="Renesto P."/>
            <person name="Abergel C."/>
            <person name="Decloquement P."/>
            <person name="Moinier D."/>
            <person name="Azza S."/>
            <person name="Ogata H."/>
            <person name="Fourquet P."/>
            <person name="Gorvel J.-P."/>
            <person name="Claverie J.-M."/>
            <person name="Raoult D."/>
        </authorList>
    </citation>
    <scope>IDENTIFICATION BY MASS SPECTROMETRY [LARGE SCALE ANALYSIS]</scope>
    <scope>SUBCELLULAR LOCATION</scope>
</reference>
<keyword id="KW-1043">Host membrane</keyword>
<keyword id="KW-0472">Membrane</keyword>
<keyword id="KW-1185">Reference proteome</keyword>
<keyword id="KW-0812">Transmembrane</keyword>
<keyword id="KW-1133">Transmembrane helix</keyword>
<keyword id="KW-0946">Virion</keyword>
<comment type="subcellular location">
    <subcellularLocation>
        <location evidence="2">Virion</location>
    </subcellularLocation>
    <subcellularLocation>
        <location evidence="3">Host membrane</location>
        <topology evidence="3">Single-pass membrane protein</topology>
    </subcellularLocation>
</comment>